<feature type="chain" id="PRO_0000136928" description="Large ribosomal subunit protein eL24">
    <location>
        <begin position="1"/>
        <end position="61"/>
    </location>
</feature>
<feature type="zinc finger region" description="C4-type" evidence="1">
    <location>
        <begin position="7"/>
        <end position="37"/>
    </location>
</feature>
<feature type="binding site" evidence="1">
    <location>
        <position position="7"/>
    </location>
    <ligand>
        <name>Zn(2+)</name>
        <dbReference type="ChEBI" id="CHEBI:29105"/>
    </ligand>
</feature>
<feature type="binding site" evidence="1">
    <location>
        <position position="10"/>
    </location>
    <ligand>
        <name>Zn(2+)</name>
        <dbReference type="ChEBI" id="CHEBI:29105"/>
    </ligand>
</feature>
<feature type="binding site" evidence="1">
    <location>
        <position position="33"/>
    </location>
    <ligand>
        <name>Zn(2+)</name>
        <dbReference type="ChEBI" id="CHEBI:29105"/>
    </ligand>
</feature>
<feature type="binding site" evidence="1">
    <location>
        <position position="37"/>
    </location>
    <ligand>
        <name>Zn(2+)</name>
        <dbReference type="ChEBI" id="CHEBI:29105"/>
    </ligand>
</feature>
<proteinExistence type="inferred from homology"/>
<dbReference type="EMBL" id="AE006641">
    <property type="protein sequence ID" value="AAK40572.1"/>
    <property type="molecule type" value="Genomic_DNA"/>
</dbReference>
<dbReference type="PIR" id="E90164">
    <property type="entry name" value="E90164"/>
</dbReference>
<dbReference type="RefSeq" id="WP_009990483.1">
    <property type="nucleotide sequence ID" value="NC_002754.1"/>
</dbReference>
<dbReference type="SMR" id="Q980Q6"/>
<dbReference type="FunCoup" id="Q980Q6">
    <property type="interactions" value="64"/>
</dbReference>
<dbReference type="STRING" id="273057.SSO5478"/>
<dbReference type="PaxDb" id="273057-SSO5478"/>
<dbReference type="EnsemblBacteria" id="AAK40572">
    <property type="protein sequence ID" value="AAK40572"/>
    <property type="gene ID" value="SSO5478"/>
</dbReference>
<dbReference type="KEGG" id="sso:SSO5478"/>
<dbReference type="PATRIC" id="fig|273057.12.peg.227"/>
<dbReference type="eggNOG" id="arCOG01950">
    <property type="taxonomic scope" value="Archaea"/>
</dbReference>
<dbReference type="HOGENOM" id="CLU_190191_0_0_2"/>
<dbReference type="InParanoid" id="Q980Q6"/>
<dbReference type="PhylomeDB" id="Q980Q6"/>
<dbReference type="Proteomes" id="UP000001974">
    <property type="component" value="Chromosome"/>
</dbReference>
<dbReference type="GO" id="GO:1990904">
    <property type="term" value="C:ribonucleoprotein complex"/>
    <property type="evidence" value="ECO:0007669"/>
    <property type="project" value="UniProtKB-KW"/>
</dbReference>
<dbReference type="GO" id="GO:0005840">
    <property type="term" value="C:ribosome"/>
    <property type="evidence" value="ECO:0007669"/>
    <property type="project" value="UniProtKB-KW"/>
</dbReference>
<dbReference type="GO" id="GO:0019843">
    <property type="term" value="F:rRNA binding"/>
    <property type="evidence" value="ECO:0007669"/>
    <property type="project" value="UniProtKB-UniRule"/>
</dbReference>
<dbReference type="GO" id="GO:0003735">
    <property type="term" value="F:structural constituent of ribosome"/>
    <property type="evidence" value="ECO:0007669"/>
    <property type="project" value="InterPro"/>
</dbReference>
<dbReference type="GO" id="GO:0008270">
    <property type="term" value="F:zinc ion binding"/>
    <property type="evidence" value="ECO:0007669"/>
    <property type="project" value="UniProtKB-UniRule"/>
</dbReference>
<dbReference type="GO" id="GO:0006412">
    <property type="term" value="P:translation"/>
    <property type="evidence" value="ECO:0007669"/>
    <property type="project" value="UniProtKB-UniRule"/>
</dbReference>
<dbReference type="CDD" id="cd00472">
    <property type="entry name" value="Ribosomal_L24e_L24"/>
    <property type="match status" value="1"/>
</dbReference>
<dbReference type="FunFam" id="2.30.170.20:FF:000001">
    <property type="entry name" value="probable ribosome biogenesis protein RLP24"/>
    <property type="match status" value="1"/>
</dbReference>
<dbReference type="Gene3D" id="2.30.170.20">
    <property type="entry name" value="Ribosomal protein L24e"/>
    <property type="match status" value="1"/>
</dbReference>
<dbReference type="HAMAP" id="MF_00773">
    <property type="entry name" value="Ribosomal_eL24"/>
    <property type="match status" value="1"/>
</dbReference>
<dbReference type="InterPro" id="IPR038630">
    <property type="entry name" value="L24e/L24_sf"/>
</dbReference>
<dbReference type="InterPro" id="IPR056366">
    <property type="entry name" value="Ribosomal_eL24"/>
</dbReference>
<dbReference type="InterPro" id="IPR055345">
    <property type="entry name" value="Ribosomal_eL24-rel_arc"/>
</dbReference>
<dbReference type="InterPro" id="IPR000988">
    <property type="entry name" value="Ribosomal_eL24-rel_N"/>
</dbReference>
<dbReference type="InterPro" id="IPR023442">
    <property type="entry name" value="Ribosomal_eL24_CS"/>
</dbReference>
<dbReference type="InterPro" id="IPR011017">
    <property type="entry name" value="TRASH_dom"/>
</dbReference>
<dbReference type="NCBIfam" id="NF034186">
    <property type="entry name" value="PRK14891.1-1"/>
    <property type="match status" value="1"/>
</dbReference>
<dbReference type="PANTHER" id="PTHR10792">
    <property type="entry name" value="60S RIBOSOMAL PROTEIN L24"/>
    <property type="match status" value="1"/>
</dbReference>
<dbReference type="PANTHER" id="PTHR10792:SF1">
    <property type="entry name" value="RIBOSOMAL PROTEIN L24"/>
    <property type="match status" value="1"/>
</dbReference>
<dbReference type="Pfam" id="PF01246">
    <property type="entry name" value="Ribosomal_L24e"/>
    <property type="match status" value="1"/>
</dbReference>
<dbReference type="SMART" id="SM00746">
    <property type="entry name" value="TRASH"/>
    <property type="match status" value="1"/>
</dbReference>
<dbReference type="SUPFAM" id="SSF57716">
    <property type="entry name" value="Glucocorticoid receptor-like (DNA-binding domain)"/>
    <property type="match status" value="1"/>
</dbReference>
<dbReference type="PROSITE" id="PS01073">
    <property type="entry name" value="RIBOSOMAL_L24E"/>
    <property type="match status" value="1"/>
</dbReference>
<organism>
    <name type="scientific">Saccharolobus solfataricus (strain ATCC 35092 / DSM 1617 / JCM 11322 / P2)</name>
    <name type="common">Sulfolobus solfataricus</name>
    <dbReference type="NCBI Taxonomy" id="273057"/>
    <lineage>
        <taxon>Archaea</taxon>
        <taxon>Thermoproteota</taxon>
        <taxon>Thermoprotei</taxon>
        <taxon>Sulfolobales</taxon>
        <taxon>Sulfolobaceae</taxon>
        <taxon>Saccharolobus</taxon>
    </lineage>
</organism>
<sequence>MPTTRQCSFCGHEIPPGTGLMYVRNDGTILWFCSSKCRKSMLKYHRDPKKYKWTTRYMKVR</sequence>
<keyword id="KW-0479">Metal-binding</keyword>
<keyword id="KW-1185">Reference proteome</keyword>
<keyword id="KW-0687">Ribonucleoprotein</keyword>
<keyword id="KW-0689">Ribosomal protein</keyword>
<keyword id="KW-0694">RNA-binding</keyword>
<keyword id="KW-0699">rRNA-binding</keyword>
<keyword id="KW-0862">Zinc</keyword>
<keyword id="KW-0863">Zinc-finger</keyword>
<accession>Q980Q6</accession>
<gene>
    <name evidence="1" type="primary">rpl24e</name>
    <name type="ordered locus">SSO5478</name>
</gene>
<name>RL24E_SACS2</name>
<protein>
    <recommendedName>
        <fullName evidence="1">Large ribosomal subunit protein eL24</fullName>
    </recommendedName>
    <alternativeName>
        <fullName evidence="2">50S ribosomal protein L24e</fullName>
    </alternativeName>
</protein>
<reference key="1">
    <citation type="journal article" date="2001" name="Proc. Natl. Acad. Sci. U.S.A.">
        <title>The complete genome of the crenarchaeon Sulfolobus solfataricus P2.</title>
        <authorList>
            <person name="She Q."/>
            <person name="Singh R.K."/>
            <person name="Confalonieri F."/>
            <person name="Zivanovic Y."/>
            <person name="Allard G."/>
            <person name="Awayez M.J."/>
            <person name="Chan-Weiher C.C.-Y."/>
            <person name="Clausen I.G."/>
            <person name="Curtis B.A."/>
            <person name="De Moors A."/>
            <person name="Erauso G."/>
            <person name="Fletcher C."/>
            <person name="Gordon P.M.K."/>
            <person name="Heikamp-de Jong I."/>
            <person name="Jeffries A.C."/>
            <person name="Kozera C.J."/>
            <person name="Medina N."/>
            <person name="Peng X."/>
            <person name="Thi-Ngoc H.P."/>
            <person name="Redder P."/>
            <person name="Schenk M.E."/>
            <person name="Theriault C."/>
            <person name="Tolstrup N."/>
            <person name="Charlebois R.L."/>
            <person name="Doolittle W.F."/>
            <person name="Duguet M."/>
            <person name="Gaasterland T."/>
            <person name="Garrett R.A."/>
            <person name="Ragan M.A."/>
            <person name="Sensen C.W."/>
            <person name="Van der Oost J."/>
        </authorList>
    </citation>
    <scope>NUCLEOTIDE SEQUENCE [LARGE SCALE GENOMIC DNA]</scope>
    <source>
        <strain>ATCC 35092 / DSM 1617 / JCM 11322 / P2</strain>
    </source>
</reference>
<evidence type="ECO:0000255" key="1">
    <source>
        <dbReference type="HAMAP-Rule" id="MF_00773"/>
    </source>
</evidence>
<evidence type="ECO:0000305" key="2"/>
<comment type="function">
    <text evidence="1">Binds to the 23S rRNA.</text>
</comment>
<comment type="cofactor">
    <cofactor evidence="1">
        <name>Zn(2+)</name>
        <dbReference type="ChEBI" id="CHEBI:29105"/>
    </cofactor>
    <text evidence="1">Binds 1 zinc ion per subunit.</text>
</comment>
<comment type="subunit">
    <text evidence="1">Part of the 50S ribosomal subunit. Forms a cluster with proteins L3 and L14.</text>
</comment>
<comment type="similarity">
    <text evidence="1">Belongs to the eukaryotic ribosomal protein eL24 family.</text>
</comment>